<protein>
    <recommendedName>
        <fullName>Prostaglandin E2 receptor EP2 subtype</fullName>
        <shortName>PGE receptor EP2 subtype</shortName>
        <shortName>PGE2 receptor EP2 subtype</shortName>
    </recommendedName>
    <alternativeName>
        <fullName>Prostanoid EP2 receptor</fullName>
    </alternativeName>
</protein>
<keyword id="KW-1003">Cell membrane</keyword>
<keyword id="KW-1015">Disulfide bond</keyword>
<keyword id="KW-0297">G-protein coupled receptor</keyword>
<keyword id="KW-0325">Glycoprotein</keyword>
<keyword id="KW-0472">Membrane</keyword>
<keyword id="KW-0675">Receptor</keyword>
<keyword id="KW-1185">Reference proteome</keyword>
<keyword id="KW-0807">Transducer</keyword>
<keyword id="KW-0812">Transmembrane</keyword>
<keyword id="KW-1133">Transmembrane helix</keyword>
<comment type="function">
    <text evidence="1">Receptor for prostaglandin E2 (PGE2). The activity of this receptor is mediated by G(s) proteins that stimulate adenylate cyclase. The subsequent raise in intracellular cAMP is responsible for the relaxing effect of this receptor on smooth muscle (By similarity).</text>
</comment>
<comment type="subcellular location">
    <subcellularLocation>
        <location>Cell membrane</location>
        <topology>Multi-pass membrane protein</topology>
    </subcellularLocation>
</comment>
<comment type="similarity">
    <text evidence="3">Belongs to the G-protein coupled receptor 1 family.</text>
</comment>
<dbReference type="EMBL" id="U48858">
    <property type="protein sequence ID" value="AAA97889.1"/>
    <property type="molecule type" value="mRNA"/>
</dbReference>
<dbReference type="EMBL" id="U94708">
    <property type="protein sequence ID" value="AAB53325.1"/>
    <property type="molecule type" value="mRNA"/>
</dbReference>
<dbReference type="EMBL" id="AF454964">
    <property type="protein sequence ID" value="AAM73855.1"/>
    <property type="molecule type" value="Genomic_DNA"/>
</dbReference>
<dbReference type="RefSeq" id="NP_112350.1">
    <property type="nucleotide sequence ID" value="NM_031088.2"/>
</dbReference>
<dbReference type="SMR" id="Q62928"/>
<dbReference type="FunCoup" id="Q62928">
    <property type="interactions" value="244"/>
</dbReference>
<dbReference type="STRING" id="10116.ENSRNOP00000064907"/>
<dbReference type="BindingDB" id="Q62928"/>
<dbReference type="ChEMBL" id="CHEMBL4909"/>
<dbReference type="DrugCentral" id="Q62928"/>
<dbReference type="GuidetoPHARMACOLOGY" id="341"/>
<dbReference type="GlyCosmos" id="Q62928">
    <property type="glycosylation" value="1 site, No reported glycans"/>
</dbReference>
<dbReference type="GlyGen" id="Q62928">
    <property type="glycosylation" value="1 site"/>
</dbReference>
<dbReference type="PhosphoSitePlus" id="Q62928"/>
<dbReference type="PaxDb" id="10116-ENSRNOP00000064907"/>
<dbReference type="Ensembl" id="ENSRNOT00000075209.3">
    <property type="protein sequence ID" value="ENSRNOP00000064907.1"/>
    <property type="gene ID" value="ENSRNOG00000050968.3"/>
</dbReference>
<dbReference type="GeneID" id="81752"/>
<dbReference type="KEGG" id="rno:81752"/>
<dbReference type="AGR" id="RGD:620020"/>
<dbReference type="CTD" id="5732"/>
<dbReference type="RGD" id="620020">
    <property type="gene designation" value="Ptger2"/>
</dbReference>
<dbReference type="eggNOG" id="KOG3656">
    <property type="taxonomic scope" value="Eukaryota"/>
</dbReference>
<dbReference type="GeneTree" id="ENSGT01050000244902"/>
<dbReference type="HOGENOM" id="CLU_045991_0_2_1"/>
<dbReference type="InParanoid" id="Q62928"/>
<dbReference type="OMA" id="CSVSPFV"/>
<dbReference type="OrthoDB" id="5959154at2759"/>
<dbReference type="PhylomeDB" id="Q62928"/>
<dbReference type="TreeFam" id="TF324982"/>
<dbReference type="Reactome" id="R-RNO-391908">
    <property type="pathway name" value="Prostanoid ligand receptors"/>
</dbReference>
<dbReference type="PRO" id="PR:Q62928"/>
<dbReference type="Proteomes" id="UP000002494">
    <property type="component" value="Chromosome 15"/>
</dbReference>
<dbReference type="Bgee" id="ENSRNOG00000050968">
    <property type="expression patterns" value="Expressed in spleen and 11 other cell types or tissues"/>
</dbReference>
<dbReference type="GO" id="GO:0005886">
    <property type="term" value="C:plasma membrane"/>
    <property type="evidence" value="ECO:0000266"/>
    <property type="project" value="RGD"/>
</dbReference>
<dbReference type="GO" id="GO:0004957">
    <property type="term" value="F:prostaglandin E receptor activity"/>
    <property type="evidence" value="ECO:0000314"/>
    <property type="project" value="RGD"/>
</dbReference>
<dbReference type="GO" id="GO:0007189">
    <property type="term" value="P:adenylate cyclase-activating G protein-coupled receptor signaling pathway"/>
    <property type="evidence" value="ECO:0000266"/>
    <property type="project" value="RGD"/>
</dbReference>
<dbReference type="GO" id="GO:0071380">
    <property type="term" value="P:cellular response to prostaglandin E stimulus"/>
    <property type="evidence" value="ECO:0000266"/>
    <property type="project" value="RGD"/>
</dbReference>
<dbReference type="GO" id="GO:0006954">
    <property type="term" value="P:inflammatory response"/>
    <property type="evidence" value="ECO:0000318"/>
    <property type="project" value="GO_Central"/>
</dbReference>
<dbReference type="GO" id="GO:0043066">
    <property type="term" value="P:negative regulation of apoptotic process"/>
    <property type="evidence" value="ECO:0000266"/>
    <property type="project" value="RGD"/>
</dbReference>
<dbReference type="GO" id="GO:1902219">
    <property type="term" value="P:negative regulation of intrinsic apoptotic signaling pathway in response to osmotic stress"/>
    <property type="evidence" value="ECO:0000266"/>
    <property type="project" value="RGD"/>
</dbReference>
<dbReference type="GO" id="GO:0007204">
    <property type="term" value="P:positive regulation of cytosolic calcium ion concentration"/>
    <property type="evidence" value="ECO:0000318"/>
    <property type="project" value="GO_Central"/>
</dbReference>
<dbReference type="GO" id="GO:1904346">
    <property type="term" value="P:positive regulation of gastric mucosal blood circulation"/>
    <property type="evidence" value="ECO:0000314"/>
    <property type="project" value="RGD"/>
</dbReference>
<dbReference type="GO" id="GO:0042127">
    <property type="term" value="P:regulation of cell population proliferation"/>
    <property type="evidence" value="ECO:0000266"/>
    <property type="project" value="RGD"/>
</dbReference>
<dbReference type="GO" id="GO:0032496">
    <property type="term" value="P:response to lipopolysaccharide"/>
    <property type="evidence" value="ECO:0000266"/>
    <property type="project" value="RGD"/>
</dbReference>
<dbReference type="GO" id="GO:0009624">
    <property type="term" value="P:response to nematode"/>
    <property type="evidence" value="ECO:0000266"/>
    <property type="project" value="RGD"/>
</dbReference>
<dbReference type="GO" id="GO:0032570">
    <property type="term" value="P:response to progesterone"/>
    <property type="evidence" value="ECO:0000266"/>
    <property type="project" value="RGD"/>
</dbReference>
<dbReference type="GO" id="GO:0001501">
    <property type="term" value="P:skeletal system development"/>
    <property type="evidence" value="ECO:0000303"/>
    <property type="project" value="RGD"/>
</dbReference>
<dbReference type="CDD" id="cd15139">
    <property type="entry name" value="7tmA_PGE2_EP2"/>
    <property type="match status" value="1"/>
</dbReference>
<dbReference type="FunFam" id="1.20.1070.10:FF:000212">
    <property type="entry name" value="Prostaglandin E2 receptor EP2 subtype"/>
    <property type="match status" value="1"/>
</dbReference>
<dbReference type="Gene3D" id="1.20.1070.10">
    <property type="entry name" value="Rhodopsin 7-helix transmembrane proteins"/>
    <property type="match status" value="1"/>
</dbReference>
<dbReference type="InterPro" id="IPR000276">
    <property type="entry name" value="GPCR_Rhodpsn"/>
</dbReference>
<dbReference type="InterPro" id="IPR017452">
    <property type="entry name" value="GPCR_Rhodpsn_7TM"/>
</dbReference>
<dbReference type="InterPro" id="IPR008365">
    <property type="entry name" value="Prostanoid_rcpt"/>
</dbReference>
<dbReference type="InterPro" id="IPR001923">
    <property type="entry name" value="Prostglndn_EP2_rcpt"/>
</dbReference>
<dbReference type="PANTHER" id="PTHR11866">
    <property type="entry name" value="G-PROTEIN COUPLED RECEPTOR FAMILY 1 MEMBER"/>
    <property type="match status" value="1"/>
</dbReference>
<dbReference type="PANTHER" id="PTHR11866:SF8">
    <property type="entry name" value="PROSTAGLANDIN E2 RECEPTOR EP2 SUBTYPE"/>
    <property type="match status" value="1"/>
</dbReference>
<dbReference type="Pfam" id="PF00001">
    <property type="entry name" value="7tm_1"/>
    <property type="match status" value="1"/>
</dbReference>
<dbReference type="PRINTS" id="PR00237">
    <property type="entry name" value="GPCRRHODOPSN"/>
</dbReference>
<dbReference type="PRINTS" id="PR01788">
    <property type="entry name" value="PROSTANOIDR"/>
</dbReference>
<dbReference type="PRINTS" id="PR00581">
    <property type="entry name" value="PRSTNOIDEP2R"/>
</dbReference>
<dbReference type="SUPFAM" id="SSF81321">
    <property type="entry name" value="Family A G protein-coupled receptor-like"/>
    <property type="match status" value="1"/>
</dbReference>
<dbReference type="PROSITE" id="PS00237">
    <property type="entry name" value="G_PROTEIN_RECEP_F1_1"/>
    <property type="match status" value="1"/>
</dbReference>
<dbReference type="PROSITE" id="PS50262">
    <property type="entry name" value="G_PROTEIN_RECEP_F1_2"/>
    <property type="match status" value="1"/>
</dbReference>
<sequence length="357" mass="39772">MDNSFNDSRRVENCESRQYLLSDESPAISSVMFTAGVLGNLIALALLARRWRGDTGCSAGSRTSISLFHVLVTELVLTDLLGTCLISPVVLASYSRNQTLVALAPESRACTYFAFTMTFFSLATMLMLFAMALERYLAIGHPYFYRRRVSRRGGLAVLPAIYGVSLLFCSLPLLNYGEYVQYCPGTWCFIQHGRTAYLQLYATVLLLLIVAVLGCNISVILNLIRMQLRSKRSRCGLSGSSLRGPGSRRRGERTSMAEETDHLILLAIMTITFAVCSLPFTIFAYMDETSSRKEKWDLRALRFLSVNSIIDPWVFVILRPPVLRLMRSVLCCRTSLRAPEAPGASCSTQQTDLCGQL</sequence>
<proteinExistence type="evidence at transcript level"/>
<reference key="1">
    <citation type="journal article" date="1997" name="Prostaglandins">
        <title>Molecular cloning and expression of a rat prostaglandin E2 receptor of the EP2 subtype.</title>
        <authorList>
            <person name="Nemoto K."/>
            <person name="Pilbeam C.C."/>
            <person name="Bilak S.R."/>
            <person name="Raisz L.G."/>
        </authorList>
    </citation>
    <scope>NUCLEOTIDE SEQUENCE [MRNA]</scope>
    <source>
        <tissue>Lung</tissue>
    </source>
</reference>
<reference key="2">
    <citation type="journal article" date="1997" name="Eur. J. Pharmacol.">
        <title>Molecular cloning and characterization of the four rat prostaglandin E2 prostanoid receptor subtypes.</title>
        <authorList>
            <person name="Boie Y."/>
            <person name="Stocco R."/>
            <person name="Sawyer N."/>
            <person name="Slipetz D.M."/>
            <person name="Ungrin M.D."/>
            <person name="Neuschafer-Rube F."/>
            <person name="Puschel G.P."/>
            <person name="Metters K.M."/>
            <person name="Abramovitz M."/>
        </authorList>
    </citation>
    <scope>NUCLEOTIDE SEQUENCE [MRNA]</scope>
    <source>
        <strain>Sprague-Dawley</strain>
        <tissue>Spleen</tissue>
    </source>
</reference>
<reference key="3">
    <citation type="submission" date="2001-12" db="EMBL/GenBank/DDBJ databases">
        <title>Constitutive expression of Ptger-ep2 in the pregnant rat uterus.</title>
        <authorList>
            <person name="Chien E.K."/>
            <person name="Mendoza J."/>
        </authorList>
    </citation>
    <scope>NUCLEOTIDE SEQUENCE [GENOMIC DNA]</scope>
    <source>
        <strain>Sprague-Dawley</strain>
    </source>
</reference>
<organism>
    <name type="scientific">Rattus norvegicus</name>
    <name type="common">Rat</name>
    <dbReference type="NCBI Taxonomy" id="10116"/>
    <lineage>
        <taxon>Eukaryota</taxon>
        <taxon>Metazoa</taxon>
        <taxon>Chordata</taxon>
        <taxon>Craniata</taxon>
        <taxon>Vertebrata</taxon>
        <taxon>Euteleostomi</taxon>
        <taxon>Mammalia</taxon>
        <taxon>Eutheria</taxon>
        <taxon>Euarchontoglires</taxon>
        <taxon>Glires</taxon>
        <taxon>Rodentia</taxon>
        <taxon>Myomorpha</taxon>
        <taxon>Muroidea</taxon>
        <taxon>Muridae</taxon>
        <taxon>Murinae</taxon>
        <taxon>Rattus</taxon>
    </lineage>
</organism>
<accession>Q62928</accession>
<accession>Q547S0</accession>
<evidence type="ECO:0000250" key="1"/>
<evidence type="ECO:0000255" key="2"/>
<evidence type="ECO:0000255" key="3">
    <source>
        <dbReference type="PROSITE-ProRule" id="PRU00521"/>
    </source>
</evidence>
<evidence type="ECO:0000256" key="4">
    <source>
        <dbReference type="SAM" id="MobiDB-lite"/>
    </source>
</evidence>
<gene>
    <name type="primary">Ptger2</name>
</gene>
<name>PE2R2_RAT</name>
<feature type="chain" id="PRO_0000070056" description="Prostaglandin E2 receptor EP2 subtype">
    <location>
        <begin position="1"/>
        <end position="357"/>
    </location>
</feature>
<feature type="topological domain" description="Extracellular" evidence="2">
    <location>
        <begin position="1"/>
        <end position="24"/>
    </location>
</feature>
<feature type="transmembrane region" description="Helical; Name=1" evidence="2">
    <location>
        <begin position="25"/>
        <end position="48"/>
    </location>
</feature>
<feature type="topological domain" description="Cytoplasmic" evidence="2">
    <location>
        <begin position="49"/>
        <end position="66"/>
    </location>
</feature>
<feature type="transmembrane region" description="Helical; Name=2" evidence="2">
    <location>
        <begin position="67"/>
        <end position="92"/>
    </location>
</feature>
<feature type="topological domain" description="Extracellular" evidence="2">
    <location>
        <begin position="93"/>
        <end position="112"/>
    </location>
</feature>
<feature type="transmembrane region" description="Helical; Name=3" evidence="2">
    <location>
        <begin position="113"/>
        <end position="133"/>
    </location>
</feature>
<feature type="topological domain" description="Cytoplasmic" evidence="2">
    <location>
        <begin position="134"/>
        <end position="152"/>
    </location>
</feature>
<feature type="transmembrane region" description="Helical; Name=4" evidence="2">
    <location>
        <begin position="153"/>
        <end position="177"/>
    </location>
</feature>
<feature type="topological domain" description="Extracellular" evidence="2">
    <location>
        <begin position="178"/>
        <end position="199"/>
    </location>
</feature>
<feature type="transmembrane region" description="Helical; Name=5" evidence="2">
    <location>
        <begin position="200"/>
        <end position="224"/>
    </location>
</feature>
<feature type="topological domain" description="Cytoplasmic" evidence="2">
    <location>
        <begin position="225"/>
        <end position="262"/>
    </location>
</feature>
<feature type="transmembrane region" description="Helical; Name=6" evidence="2">
    <location>
        <begin position="263"/>
        <end position="286"/>
    </location>
</feature>
<feature type="topological domain" description="Extracellular" evidence="2">
    <location>
        <begin position="287"/>
        <end position="299"/>
    </location>
</feature>
<feature type="transmembrane region" description="Helical; Name=7" evidence="2">
    <location>
        <begin position="300"/>
        <end position="323"/>
    </location>
</feature>
<feature type="topological domain" description="Cytoplasmic" evidence="2">
    <location>
        <begin position="324"/>
        <end position="357"/>
    </location>
</feature>
<feature type="region of interest" description="Disordered" evidence="4">
    <location>
        <begin position="235"/>
        <end position="255"/>
    </location>
</feature>
<feature type="compositionally biased region" description="Low complexity" evidence="4">
    <location>
        <begin position="235"/>
        <end position="245"/>
    </location>
</feature>
<feature type="glycosylation site" description="N-linked (GlcNAc...) asparagine" evidence="2">
    <location>
        <position position="6"/>
    </location>
</feature>
<feature type="disulfide bond" evidence="3">
    <location>
        <begin position="110"/>
        <end position="188"/>
    </location>
</feature>